<gene>
    <name type="primary">SODC</name>
</gene>
<name>SODC_BRUPA</name>
<sequence>MSANRIAVLRGDNVSGIIRFKQEKEGSPTTISGEIKGLTPGLHGFHVHQYGDTTNGCISAGPHFNPYNKTHGGPTDEMRHVGDLGNIVAGADGTAHIDISDKHVQLLGPNSIIGRSLVVHADQDDLGKGVGDKKDESLKTGNAGARVACGIVAVSAAS</sequence>
<comment type="function">
    <text>Destroys radicals which are normally produced within the cells and which are toxic to biological systems.</text>
</comment>
<comment type="catalytic activity">
    <reaction>
        <text>2 superoxide + 2 H(+) = H2O2 + O2</text>
        <dbReference type="Rhea" id="RHEA:20696"/>
        <dbReference type="ChEBI" id="CHEBI:15378"/>
        <dbReference type="ChEBI" id="CHEBI:15379"/>
        <dbReference type="ChEBI" id="CHEBI:16240"/>
        <dbReference type="ChEBI" id="CHEBI:18421"/>
        <dbReference type="EC" id="1.15.1.1"/>
    </reaction>
</comment>
<comment type="cofactor">
    <cofactor evidence="1">
        <name>Cu cation</name>
        <dbReference type="ChEBI" id="CHEBI:23378"/>
    </cofactor>
    <text evidence="1">Binds 1 copper ion per subunit.</text>
</comment>
<comment type="cofactor">
    <cofactor evidence="1">
        <name>Zn(2+)</name>
        <dbReference type="ChEBI" id="CHEBI:29105"/>
    </cofactor>
    <text evidence="1">Binds 1 zinc ion per subunit.</text>
</comment>
<comment type="subunit">
    <text>Homodimer.</text>
</comment>
<comment type="subcellular location">
    <subcellularLocation>
        <location>Cytoplasm</location>
    </subcellularLocation>
</comment>
<comment type="similarity">
    <text evidence="2">Belongs to the Cu-Zn superoxide dismutase family.</text>
</comment>
<dbReference type="EC" id="1.15.1.1"/>
<dbReference type="EMBL" id="X76284">
    <property type="protein sequence ID" value="CAA53902.1"/>
    <property type="molecule type" value="mRNA"/>
</dbReference>
<dbReference type="SMR" id="P41962"/>
<dbReference type="STRING" id="6280.P41962"/>
<dbReference type="GO" id="GO:0005737">
    <property type="term" value="C:cytoplasm"/>
    <property type="evidence" value="ECO:0007669"/>
    <property type="project" value="UniProtKB-SubCell"/>
</dbReference>
<dbReference type="GO" id="GO:0005507">
    <property type="term" value="F:copper ion binding"/>
    <property type="evidence" value="ECO:0007669"/>
    <property type="project" value="InterPro"/>
</dbReference>
<dbReference type="GO" id="GO:0004784">
    <property type="term" value="F:superoxide dismutase activity"/>
    <property type="evidence" value="ECO:0007669"/>
    <property type="project" value="UniProtKB-EC"/>
</dbReference>
<dbReference type="CDD" id="cd00305">
    <property type="entry name" value="Cu-Zn_Superoxide_Dismutase"/>
    <property type="match status" value="1"/>
</dbReference>
<dbReference type="FunFam" id="2.60.40.200:FF:000001">
    <property type="entry name" value="Superoxide dismutase [Cu-Zn]"/>
    <property type="match status" value="1"/>
</dbReference>
<dbReference type="Gene3D" id="2.60.40.200">
    <property type="entry name" value="Superoxide dismutase, copper/zinc binding domain"/>
    <property type="match status" value="1"/>
</dbReference>
<dbReference type="InterPro" id="IPR036423">
    <property type="entry name" value="SOD-like_Cu/Zn_dom_sf"/>
</dbReference>
<dbReference type="InterPro" id="IPR024134">
    <property type="entry name" value="SOD_Cu/Zn_/chaperone"/>
</dbReference>
<dbReference type="InterPro" id="IPR018152">
    <property type="entry name" value="SOD_Cu/Zn_BS"/>
</dbReference>
<dbReference type="InterPro" id="IPR001424">
    <property type="entry name" value="SOD_Cu_Zn_dom"/>
</dbReference>
<dbReference type="PANTHER" id="PTHR10003">
    <property type="entry name" value="SUPEROXIDE DISMUTASE CU-ZN -RELATED"/>
    <property type="match status" value="1"/>
</dbReference>
<dbReference type="Pfam" id="PF00080">
    <property type="entry name" value="Sod_Cu"/>
    <property type="match status" value="1"/>
</dbReference>
<dbReference type="PRINTS" id="PR00068">
    <property type="entry name" value="CUZNDISMTASE"/>
</dbReference>
<dbReference type="SUPFAM" id="SSF49329">
    <property type="entry name" value="Cu,Zn superoxide dismutase-like"/>
    <property type="match status" value="1"/>
</dbReference>
<dbReference type="PROSITE" id="PS00087">
    <property type="entry name" value="SOD_CU_ZN_1"/>
    <property type="match status" value="1"/>
</dbReference>
<dbReference type="PROSITE" id="PS00332">
    <property type="entry name" value="SOD_CU_ZN_2"/>
    <property type="match status" value="1"/>
</dbReference>
<feature type="chain" id="PRO_0000164101" description="Superoxide dismutase [Cu-Zn]">
    <location>
        <begin position="1"/>
        <end position="158"/>
    </location>
</feature>
<feature type="binding site" evidence="1">
    <location>
        <position position="46"/>
    </location>
    <ligand>
        <name>Cu cation</name>
        <dbReference type="ChEBI" id="CHEBI:23378"/>
        <note>catalytic</note>
    </ligand>
</feature>
<feature type="binding site" evidence="1">
    <location>
        <position position="48"/>
    </location>
    <ligand>
        <name>Cu cation</name>
        <dbReference type="ChEBI" id="CHEBI:23378"/>
        <note>catalytic</note>
    </ligand>
</feature>
<feature type="binding site" evidence="1">
    <location>
        <position position="63"/>
    </location>
    <ligand>
        <name>Cu cation</name>
        <dbReference type="ChEBI" id="CHEBI:23378"/>
        <note>catalytic</note>
    </ligand>
</feature>
<feature type="binding site" evidence="1">
    <location>
        <position position="63"/>
    </location>
    <ligand>
        <name>Zn(2+)</name>
        <dbReference type="ChEBI" id="CHEBI:29105"/>
        <note>structural</note>
    </ligand>
</feature>
<feature type="binding site" evidence="1">
    <location>
        <position position="71"/>
    </location>
    <ligand>
        <name>Zn(2+)</name>
        <dbReference type="ChEBI" id="CHEBI:29105"/>
        <note>structural</note>
    </ligand>
</feature>
<feature type="binding site" evidence="1">
    <location>
        <position position="80"/>
    </location>
    <ligand>
        <name>Zn(2+)</name>
        <dbReference type="ChEBI" id="CHEBI:29105"/>
        <note>structural</note>
    </ligand>
</feature>
<feature type="binding site" evidence="1">
    <location>
        <position position="83"/>
    </location>
    <ligand>
        <name>Zn(2+)</name>
        <dbReference type="ChEBI" id="CHEBI:29105"/>
        <note>structural</note>
    </ligand>
</feature>
<feature type="binding site" evidence="1">
    <location>
        <position position="120"/>
    </location>
    <ligand>
        <name>Cu cation</name>
        <dbReference type="ChEBI" id="CHEBI:23378"/>
        <note>catalytic</note>
    </ligand>
</feature>
<feature type="disulfide bond" evidence="1">
    <location>
        <begin position="57"/>
        <end position="149"/>
    </location>
</feature>
<protein>
    <recommendedName>
        <fullName>Superoxide dismutase [Cu-Zn]</fullName>
        <ecNumber>1.15.1.1</ecNumber>
    </recommendedName>
</protein>
<accession>P41962</accession>
<proteinExistence type="evidence at transcript level"/>
<evidence type="ECO:0000250" key="1"/>
<evidence type="ECO:0000305" key="2"/>
<organism>
    <name type="scientific">Brugia pahangi</name>
    <name type="common">Filarial nematode worm</name>
    <dbReference type="NCBI Taxonomy" id="6280"/>
    <lineage>
        <taxon>Eukaryota</taxon>
        <taxon>Metazoa</taxon>
        <taxon>Ecdysozoa</taxon>
        <taxon>Nematoda</taxon>
        <taxon>Chromadorea</taxon>
        <taxon>Rhabditida</taxon>
        <taxon>Spirurina</taxon>
        <taxon>Spiruromorpha</taxon>
        <taxon>Filarioidea</taxon>
        <taxon>Onchocercidae</taxon>
        <taxon>Brugia</taxon>
    </lineage>
</organism>
<keyword id="KW-0049">Antioxidant</keyword>
<keyword id="KW-0186">Copper</keyword>
<keyword id="KW-0963">Cytoplasm</keyword>
<keyword id="KW-1015">Disulfide bond</keyword>
<keyword id="KW-0479">Metal-binding</keyword>
<keyword id="KW-0560">Oxidoreductase</keyword>
<keyword id="KW-0862">Zinc</keyword>
<reference key="1">
    <citation type="journal article" date="1994" name="Infect. Immun.">
        <title>Extracellular and cytoplasmic CuZn superoxide dismutases from Brugia lymphatic filarial nematode parasites.</title>
        <authorList>
            <person name="Tang L."/>
            <person name="Ou X."/>
            <person name="Henkle K.J."/>
            <person name="Selkirk M.E."/>
        </authorList>
    </citation>
    <scope>NUCLEOTIDE SEQUENCE [MRNA]</scope>
</reference>